<reference key="1">
    <citation type="submission" date="2008-12" db="EMBL/GenBank/DDBJ databases">
        <title>Complete sequence of chromosome of Methylobacterium chloromethanicum CM4.</title>
        <authorList>
            <consortium name="US DOE Joint Genome Institute"/>
            <person name="Lucas S."/>
            <person name="Copeland A."/>
            <person name="Lapidus A."/>
            <person name="Glavina del Rio T."/>
            <person name="Dalin E."/>
            <person name="Tice H."/>
            <person name="Bruce D."/>
            <person name="Goodwin L."/>
            <person name="Pitluck S."/>
            <person name="Chertkov O."/>
            <person name="Brettin T."/>
            <person name="Detter J.C."/>
            <person name="Han C."/>
            <person name="Larimer F."/>
            <person name="Land M."/>
            <person name="Hauser L."/>
            <person name="Kyrpides N."/>
            <person name="Mikhailova N."/>
            <person name="Marx C."/>
            <person name="Richardson P."/>
        </authorList>
    </citation>
    <scope>NUCLEOTIDE SEQUENCE [LARGE SCALE GENOMIC DNA]</scope>
    <source>
        <strain>CM4 / NCIMB 13688</strain>
    </source>
</reference>
<gene>
    <name evidence="1" type="primary">clpP</name>
    <name type="ordered locus">Mchl_2679</name>
</gene>
<organism>
    <name type="scientific">Methylorubrum extorquens (strain CM4 / NCIMB 13688)</name>
    <name type="common">Methylobacterium extorquens</name>
    <dbReference type="NCBI Taxonomy" id="440085"/>
    <lineage>
        <taxon>Bacteria</taxon>
        <taxon>Pseudomonadati</taxon>
        <taxon>Pseudomonadota</taxon>
        <taxon>Alphaproteobacteria</taxon>
        <taxon>Hyphomicrobiales</taxon>
        <taxon>Methylobacteriaceae</taxon>
        <taxon>Methylorubrum</taxon>
    </lineage>
</organism>
<evidence type="ECO:0000255" key="1">
    <source>
        <dbReference type="HAMAP-Rule" id="MF_00444"/>
    </source>
</evidence>
<dbReference type="EC" id="3.4.21.92" evidence="1"/>
<dbReference type="EMBL" id="CP001298">
    <property type="protein sequence ID" value="ACK83519.1"/>
    <property type="molecule type" value="Genomic_DNA"/>
</dbReference>
<dbReference type="RefSeq" id="WP_003600395.1">
    <property type="nucleotide sequence ID" value="NC_011757.1"/>
</dbReference>
<dbReference type="SMR" id="B7KNT0"/>
<dbReference type="MEROPS" id="S14.001"/>
<dbReference type="KEGG" id="mch:Mchl_2679"/>
<dbReference type="HOGENOM" id="CLU_058707_3_3_5"/>
<dbReference type="Proteomes" id="UP000002385">
    <property type="component" value="Chromosome"/>
</dbReference>
<dbReference type="GO" id="GO:0005737">
    <property type="term" value="C:cytoplasm"/>
    <property type="evidence" value="ECO:0007669"/>
    <property type="project" value="UniProtKB-SubCell"/>
</dbReference>
<dbReference type="GO" id="GO:0009368">
    <property type="term" value="C:endopeptidase Clp complex"/>
    <property type="evidence" value="ECO:0007669"/>
    <property type="project" value="TreeGrafter"/>
</dbReference>
<dbReference type="GO" id="GO:0004176">
    <property type="term" value="F:ATP-dependent peptidase activity"/>
    <property type="evidence" value="ECO:0007669"/>
    <property type="project" value="InterPro"/>
</dbReference>
<dbReference type="GO" id="GO:0051117">
    <property type="term" value="F:ATPase binding"/>
    <property type="evidence" value="ECO:0007669"/>
    <property type="project" value="TreeGrafter"/>
</dbReference>
<dbReference type="GO" id="GO:0004252">
    <property type="term" value="F:serine-type endopeptidase activity"/>
    <property type="evidence" value="ECO:0007669"/>
    <property type="project" value="UniProtKB-UniRule"/>
</dbReference>
<dbReference type="GO" id="GO:0006515">
    <property type="term" value="P:protein quality control for misfolded or incompletely synthesized proteins"/>
    <property type="evidence" value="ECO:0007669"/>
    <property type="project" value="TreeGrafter"/>
</dbReference>
<dbReference type="CDD" id="cd07017">
    <property type="entry name" value="S14_ClpP_2"/>
    <property type="match status" value="1"/>
</dbReference>
<dbReference type="FunFam" id="3.90.226.10:FF:000001">
    <property type="entry name" value="ATP-dependent Clp protease proteolytic subunit"/>
    <property type="match status" value="1"/>
</dbReference>
<dbReference type="Gene3D" id="3.90.226.10">
    <property type="entry name" value="2-enoyl-CoA Hydratase, Chain A, domain 1"/>
    <property type="match status" value="1"/>
</dbReference>
<dbReference type="HAMAP" id="MF_00444">
    <property type="entry name" value="ClpP"/>
    <property type="match status" value="1"/>
</dbReference>
<dbReference type="InterPro" id="IPR001907">
    <property type="entry name" value="ClpP"/>
</dbReference>
<dbReference type="InterPro" id="IPR029045">
    <property type="entry name" value="ClpP/crotonase-like_dom_sf"/>
</dbReference>
<dbReference type="InterPro" id="IPR023562">
    <property type="entry name" value="ClpP/TepA"/>
</dbReference>
<dbReference type="InterPro" id="IPR033135">
    <property type="entry name" value="ClpP_His_AS"/>
</dbReference>
<dbReference type="InterPro" id="IPR018215">
    <property type="entry name" value="ClpP_Ser_AS"/>
</dbReference>
<dbReference type="NCBIfam" id="NF001368">
    <property type="entry name" value="PRK00277.1"/>
    <property type="match status" value="1"/>
</dbReference>
<dbReference type="NCBIfam" id="NF009205">
    <property type="entry name" value="PRK12553.1"/>
    <property type="match status" value="1"/>
</dbReference>
<dbReference type="PANTHER" id="PTHR10381">
    <property type="entry name" value="ATP-DEPENDENT CLP PROTEASE PROTEOLYTIC SUBUNIT"/>
    <property type="match status" value="1"/>
</dbReference>
<dbReference type="PANTHER" id="PTHR10381:SF70">
    <property type="entry name" value="ATP-DEPENDENT CLP PROTEASE PROTEOLYTIC SUBUNIT"/>
    <property type="match status" value="1"/>
</dbReference>
<dbReference type="Pfam" id="PF00574">
    <property type="entry name" value="CLP_protease"/>
    <property type="match status" value="1"/>
</dbReference>
<dbReference type="PRINTS" id="PR00127">
    <property type="entry name" value="CLPPROTEASEP"/>
</dbReference>
<dbReference type="SUPFAM" id="SSF52096">
    <property type="entry name" value="ClpP/crotonase"/>
    <property type="match status" value="1"/>
</dbReference>
<dbReference type="PROSITE" id="PS00382">
    <property type="entry name" value="CLP_PROTEASE_HIS"/>
    <property type="match status" value="1"/>
</dbReference>
<dbReference type="PROSITE" id="PS00381">
    <property type="entry name" value="CLP_PROTEASE_SER"/>
    <property type="match status" value="1"/>
</dbReference>
<sequence length="208" mass="23098">MRDPVDYFHNSLVPMVVEQSSRGERAFDIYSRLLRERIIFLTGPVEDQGASLIVAQLLFLEAENPKKEISFYINSPGGVVTSGLSIYDTMQFIRCPVTTLCVGQAASMGSLLLAAGEAGHRFALPNARIMVHQPSGGFQGQATDILIHAREIEALKKRLNEIYVKHTGREYETIHQALERDNFMTADAAKEFGLIDDILHKRPEPAAA</sequence>
<accession>B7KNT0</accession>
<comment type="function">
    <text evidence="1">Cleaves peptides in various proteins in a process that requires ATP hydrolysis. Has a chymotrypsin-like activity. Plays a major role in the degradation of misfolded proteins.</text>
</comment>
<comment type="catalytic activity">
    <reaction evidence="1">
        <text>Hydrolysis of proteins to small peptides in the presence of ATP and magnesium. alpha-casein is the usual test substrate. In the absence of ATP, only oligopeptides shorter than five residues are hydrolyzed (such as succinyl-Leu-Tyr-|-NHMec, and Leu-Tyr-Leu-|-Tyr-Trp, in which cleavage of the -Tyr-|-Leu- and -Tyr-|-Trp bonds also occurs).</text>
        <dbReference type="EC" id="3.4.21.92"/>
    </reaction>
</comment>
<comment type="subunit">
    <text evidence="1">Fourteen ClpP subunits assemble into 2 heptameric rings which stack back to back to give a disk-like structure with a central cavity, resembling the structure of eukaryotic proteasomes.</text>
</comment>
<comment type="subcellular location">
    <subcellularLocation>
        <location evidence="1">Cytoplasm</location>
    </subcellularLocation>
</comment>
<comment type="similarity">
    <text evidence="1">Belongs to the peptidase S14 family.</text>
</comment>
<keyword id="KW-0963">Cytoplasm</keyword>
<keyword id="KW-0378">Hydrolase</keyword>
<keyword id="KW-0645">Protease</keyword>
<keyword id="KW-0720">Serine protease</keyword>
<proteinExistence type="inferred from homology"/>
<protein>
    <recommendedName>
        <fullName evidence="1">ATP-dependent Clp protease proteolytic subunit</fullName>
        <ecNumber evidence="1">3.4.21.92</ecNumber>
    </recommendedName>
    <alternativeName>
        <fullName evidence="1">Endopeptidase Clp</fullName>
    </alternativeName>
</protein>
<name>CLPP_METC4</name>
<feature type="chain" id="PRO_1000135160" description="ATP-dependent Clp protease proteolytic subunit">
    <location>
        <begin position="1"/>
        <end position="208"/>
    </location>
</feature>
<feature type="active site" description="Nucleophile" evidence="1">
    <location>
        <position position="107"/>
    </location>
</feature>
<feature type="active site" evidence="1">
    <location>
        <position position="132"/>
    </location>
</feature>